<protein>
    <recommendedName>
        <fullName>Cytochrome b mRNA maturase bI2</fullName>
    </recommendedName>
</protein>
<name>MBI2_YEAST</name>
<feature type="chain" id="PRO_0000061914" description="Cytochrome b mRNA maturase bI2">
    <location>
        <begin position="1"/>
        <end position="423"/>
    </location>
</feature>
<feature type="topological domain" description="Mitochondrial matrix" evidence="1">
    <location>
        <begin position="1"/>
        <end position="31"/>
    </location>
</feature>
<feature type="transmembrane region" description="Helical" evidence="2">
    <location>
        <begin position="32"/>
        <end position="52"/>
    </location>
</feature>
<feature type="topological domain" description="Mitochondrial intermembrane" evidence="1">
    <location>
        <begin position="53"/>
        <end position="84"/>
    </location>
</feature>
<feature type="transmembrane region" description="Helical" evidence="2">
    <location>
        <begin position="85"/>
        <end position="105"/>
    </location>
</feature>
<feature type="topological domain" description="Mitochondrial matrix" evidence="1">
    <location>
        <begin position="106"/>
        <end position="115"/>
    </location>
</feature>
<feature type="transmembrane region" description="Helical" evidence="2">
    <location>
        <begin position="116"/>
        <end position="136"/>
    </location>
</feature>
<feature type="topological domain" description="Mitochondrial intermembrane" evidence="1">
    <location>
        <begin position="137"/>
        <end position="153"/>
    </location>
</feature>
<feature type="transmembrane region" description="Helical" evidence="2">
    <location>
        <begin position="154"/>
        <end position="174"/>
    </location>
</feature>
<feature type="topological domain" description="Mitochondrial matrix" evidence="1">
    <location>
        <begin position="175"/>
        <end position="423"/>
    </location>
</feature>
<feature type="region of interest" description="Cytochrome b">
    <location>
        <begin position="1"/>
        <end position="143"/>
    </location>
</feature>
<feature type="region of interest" description="Maturase">
    <location>
        <begin position="144"/>
        <end position="423"/>
    </location>
</feature>
<feature type="sequence variant" description="In strain: ATCC 44821 / 777-3A." evidence="4">
    <original>I</original>
    <variation>T</variation>
    <location>
        <position position="122"/>
    </location>
</feature>
<feature type="sequence variant" description="In strain: Capensis / YB4237." evidence="5">
    <original>N</original>
    <variation>D</variation>
    <location>
        <position position="221"/>
    </location>
</feature>
<feature type="sequence variant" description="In strain: Capensis / YB4237." evidence="5">
    <original>M</original>
    <variation>T</variation>
    <location>
        <position position="315"/>
    </location>
</feature>
<feature type="sequence variant" description="In strain: ATCC 44821 / 777-3A." evidence="4">
    <original>I</original>
    <variation>M</variation>
    <location>
        <position position="324"/>
    </location>
</feature>
<feature type="sequence variant" description="In strain: Capensis / YB4237." evidence="5">
    <original>T</original>
    <variation>A</variation>
    <location>
        <position position="355"/>
    </location>
</feature>
<feature type="sequence variant" description="In strain: Capensis / YB4237." evidence="5">
    <original>T</original>
    <variation>H</variation>
    <location>
        <position position="382"/>
    </location>
</feature>
<feature type="mutagenesis site" description="In M1282 / M4111; abolishes maturase and endonuclease activity." evidence="3">
    <original>G</original>
    <variation>D</variation>
    <location>
        <position position="228"/>
    </location>
</feature>
<feature type="mutagenesis site" description="Abolishes endonuclease activity." evidence="3">
    <original>D</original>
    <variation>S</variation>
    <location>
        <position position="233"/>
    </location>
</feature>
<feature type="mutagenesis site" description="In M4962; abolishes maturase and endonuclease activity." evidence="3">
    <original>H</original>
    <variation>P</variation>
    <location>
        <position position="235"/>
    </location>
</feature>
<feature type="mutagenesis site" description="Abolishes maturase and endonuclease activity." evidence="3">
    <original>I</original>
    <variation>D</variation>
    <location>
        <position position="339"/>
    </location>
</feature>
<feature type="mutagenesis site" description="Abolishes endonuclease activity." evidence="3">
    <original>D</original>
    <variation>S</variation>
    <location>
        <position position="343"/>
    </location>
</feature>
<feature type="mutagenesis site" description="Abolishes endonuclease activity." evidence="3">
    <original>D</original>
    <variation>S</variation>
    <location>
        <position position="344"/>
    </location>
</feature>
<feature type="mutagenesis site" description="Abolishes endonuclease activity. In box3-2 /G1909; abolishes maturase and endonuclease activity; when associated with N-393." evidence="4 5">
    <original>V</original>
    <variation>F</variation>
    <location>
        <position position="364"/>
    </location>
</feature>
<feature type="mutagenesis site" description="In W404-3; abolishes maturase and endonuclease activity; when associated with M-395." evidence="3">
    <original>S</original>
    <variation>Y</variation>
    <location>
        <position position="379"/>
    </location>
</feature>
<feature type="mutagenesis site" description="Abolishes endonuclease activity. In box3-2 /G1909; abolishes maturase and endonuclease activity; when associated with F-364." evidence="4 5">
    <original>I</original>
    <variation>N</variation>
    <location>
        <position position="393"/>
    </location>
</feature>
<feature type="mutagenesis site" description="In W404-4; abolishes maturase and endonuclease activity; when associated with Y-379." evidence="3">
    <original>V</original>
    <variation>M</variation>
    <location>
        <position position="395"/>
    </location>
</feature>
<reference key="1">
    <citation type="journal article" date="1998" name="FEBS Lett.">
        <title>The complete sequence of the mitochondrial genome of Saccharomyces cerevisiae.</title>
        <authorList>
            <person name="Foury F."/>
            <person name="Roganti T."/>
            <person name="Lecrenier N."/>
            <person name="Purnelle B."/>
        </authorList>
    </citation>
    <scope>NUCLEOTIDE SEQUENCE [LARGE SCALE GENOMIC DNA]</scope>
    <source>
        <strain>ATCC 96604 / S288c / FY1679</strain>
    </source>
</reference>
<reference key="2">
    <citation type="journal article" date="2014" name="G3 (Bethesda)">
        <title>The reference genome sequence of Saccharomyces cerevisiae: Then and now.</title>
        <authorList>
            <person name="Engel S.R."/>
            <person name="Dietrich F.S."/>
            <person name="Fisk D.G."/>
            <person name="Binkley G."/>
            <person name="Balakrishnan R."/>
            <person name="Costanzo M.C."/>
            <person name="Dwight S.S."/>
            <person name="Hitz B.C."/>
            <person name="Karra K."/>
            <person name="Nash R.S."/>
            <person name="Weng S."/>
            <person name="Wong E.D."/>
            <person name="Lloyd P."/>
            <person name="Skrzypek M.S."/>
            <person name="Miyasato S.R."/>
            <person name="Simison M."/>
            <person name="Cherry J.M."/>
        </authorList>
    </citation>
    <scope>GENOME REANNOTATION</scope>
    <source>
        <strain>ATCC 96604 / S288c / FY1679</strain>
    </source>
</reference>
<reference key="3">
    <citation type="journal article" date="1980" name="J. Biol. Chem.">
        <title>Assembly of the mitochondrial membrane system. DNA sequence and organization of the cytochrome b gene in Saccharomyces cerevisiae D273-10B.</title>
        <authorList>
            <person name="Nobrega F.G."/>
            <person name="Tzagoloff A."/>
        </authorList>
    </citation>
    <scope>NUCLEOTIDE SEQUENCE [GENOMIC DNA] OF 1-143</scope>
    <source>
        <strain>D273-10B/A21</strain>
    </source>
</reference>
<reference key="4">
    <citation type="journal article" date="1980" name="Cell">
        <title>Sequence of introns and flanking exons in wild-type and box3 mutants of cytochrome b reveals an interlaced splicing protein coded by an intron.</title>
        <authorList>
            <person name="Lazowska J."/>
            <person name="Jacq C."/>
            <person name="Slonimski P.P."/>
        </authorList>
    </citation>
    <scope>NUCLEOTIDE SEQUENCE [GENOMIC DNA] OF 20-423</scope>
    <scope>VARIANTS THR-122 AND MET-324</scope>
    <scope>MUTAGENESIS OF VAL-364 AND ILE-393</scope>
    <scope>FUNCTION</scope>
    <source>
        <strain>ATCC 44821 / 777-3A</strain>
    </source>
</reference>
<reference key="5">
    <citation type="journal article" date="1996" name="EMBO J.">
        <title>Replacement of two non-adjacent amino acids in the S.cerevisiae bi2 intron-encoded RNA maturase is sufficient to gain a homing-endonuclease activity.</title>
        <authorList>
            <person name="Szczepanek T."/>
            <person name="Lazowska J."/>
        </authorList>
    </citation>
    <scope>NUCLEOTIDE SEQUENCE [GENOMIC DNA] OF 144-423</scope>
    <scope>VARIANTS ASP-221; THR-315; ALA-355 AND HIS-382</scope>
    <scope>MUTAGENESIS OF VAL-364 AND ILE-393</scope>
    <scope>FUNCTION</scope>
    <source>
        <strain>Capensis / YB4237</strain>
    </source>
</reference>
<reference key="6">
    <citation type="journal article" date="2000" name="Mol. Gen. Genet.">
        <title>Critical base substitutions that affect the splicing and/or homing activities of the group I intron bi2 of yeast mitochondria.</title>
        <authorList>
            <person name="Szczepanek T."/>
            <person name="Jamoussi K."/>
            <person name="Lazowska J."/>
        </authorList>
    </citation>
    <scope>MUTAGENESIS OF GLY-228; ASP-233; HIS-235; ILE-339; ASP-343; ASP-344; SER-379 AND VAL-395</scope>
    <scope>FUNCTION</scope>
</reference>
<comment type="function">
    <text evidence="3 4 5">This protein is responsible for splicing and maturation of cytochrome b mRNA. Specifically, it may be responsible for the splicing specificity of the second intron.</text>
</comment>
<comment type="subcellular location">
    <subcellularLocation>
        <location evidence="6">Mitochondrion inner membrane</location>
        <topology evidence="6">Multi-pass membrane protein</topology>
    </subcellularLocation>
</comment>
<comment type="polymorphism">
    <text evidence="5">The variant in strain Capensis / YB4237 has additional DNA endonuclease (I-ScaI) activity promoting intron homing, which makes intron 2 of the COB gene highly mobile (PubMed:8670880). Introduction of 2 (Ala-355 and His-382) of its 4 variant residues into other strains is sufficient for acquisition of endonuclease activity of the corresponding mRNA maturases and for induction of intron mobility (PubMed:8670880).</text>
</comment>
<comment type="miscellaneous">
    <text>Encoded from partially processed COB mRNA that terminates with the in-frame coding sequence of the second intron.</text>
</comment>
<comment type="similarity">
    <text evidence="6">In the N-terminal section; belongs to the cytochrome b family.</text>
</comment>
<comment type="similarity">
    <text evidence="6">In the C-terminal section; belongs to the LAGLIDADG endonuclease family.</text>
</comment>
<comment type="sequence caution" evidence="6">
    <conflict type="miscellaneous discrepancy">
        <sequence resource="EMBL-CDS" id="CAA24073"/>
    </conflict>
</comment>
<geneLocation type="mitochondrion"/>
<accession>P03873</accession>
<accession>A0A0A7P383</accession>
<accession>Q9T2W1</accession>
<accession>Q9ZZW8</accession>
<dbReference type="EMBL" id="KP263414">
    <property type="protein sequence ID" value="AIZ98893.1"/>
    <property type="molecule type" value="Genomic_DNA"/>
</dbReference>
<dbReference type="EMBL" id="V00696">
    <property type="protein sequence ID" value="CAA24073.2"/>
    <property type="status" value="ALT_SEQ"/>
    <property type="molecule type" value="Genomic_DNA"/>
</dbReference>
<dbReference type="EMBL" id="AH001282">
    <property type="protein sequence ID" value="AAA32150.2"/>
    <property type="molecule type" value="Genomic_DNA"/>
</dbReference>
<dbReference type="EMBL" id="X95974">
    <property type="protein sequence ID" value="CAD24485.1"/>
    <property type="molecule type" value="Genomic_DNA"/>
</dbReference>
<dbReference type="PIR" id="A04505">
    <property type="entry name" value="MRBY"/>
</dbReference>
<dbReference type="PIR" id="S78662">
    <property type="entry name" value="S78662"/>
</dbReference>
<dbReference type="RefSeq" id="NP_009318.1">
    <property type="nucleotide sequence ID" value="NC_001224.1"/>
</dbReference>
<dbReference type="SMR" id="P03873"/>
<dbReference type="BioGRID" id="34795">
    <property type="interactions" value="6"/>
</dbReference>
<dbReference type="FunCoup" id="P03873">
    <property type="interactions" value="99"/>
</dbReference>
<dbReference type="MINT" id="P03873"/>
<dbReference type="STRING" id="4932.Q0110"/>
<dbReference type="REBASE" id="2905">
    <property type="entry name" value="I-ScaI"/>
</dbReference>
<dbReference type="PaxDb" id="4932-Q0110"/>
<dbReference type="PeptideAtlas" id="P03873"/>
<dbReference type="EnsemblFungi" id="Q0110_mRNA">
    <property type="protein sequence ID" value="Q0110"/>
    <property type="gene ID" value="Q0110"/>
</dbReference>
<dbReference type="GeneID" id="854604"/>
<dbReference type="KEGG" id="sce:Q0110"/>
<dbReference type="AGR" id="SGD:S000007271"/>
<dbReference type="SGD" id="S000007271">
    <property type="gene designation" value="BI2"/>
</dbReference>
<dbReference type="VEuPathDB" id="FungiDB:Q0110"/>
<dbReference type="eggNOG" id="KOG4663">
    <property type="taxonomic scope" value="Eukaryota"/>
</dbReference>
<dbReference type="GeneTree" id="ENSGT00390000017948"/>
<dbReference type="HOGENOM" id="CLU_649251_0_0_1"/>
<dbReference type="InParanoid" id="P03873"/>
<dbReference type="OrthoDB" id="5428677at2759"/>
<dbReference type="BioCyc" id="YEAST:G3O-34380-MONOMER"/>
<dbReference type="PRO" id="PR:P03873"/>
<dbReference type="Proteomes" id="UP000002311">
    <property type="component" value="Mitochondrion"/>
</dbReference>
<dbReference type="RNAct" id="P03873">
    <property type="molecule type" value="protein"/>
</dbReference>
<dbReference type="GO" id="GO:0005743">
    <property type="term" value="C:mitochondrial inner membrane"/>
    <property type="evidence" value="ECO:0007669"/>
    <property type="project" value="UniProtKB-SubCell"/>
</dbReference>
<dbReference type="GO" id="GO:0005739">
    <property type="term" value="C:mitochondrion"/>
    <property type="evidence" value="ECO:0000304"/>
    <property type="project" value="SGD"/>
</dbReference>
<dbReference type="GO" id="GO:0009055">
    <property type="term" value="F:electron transfer activity"/>
    <property type="evidence" value="ECO:0007669"/>
    <property type="project" value="InterPro"/>
</dbReference>
<dbReference type="GO" id="GO:0004519">
    <property type="term" value="F:endonuclease activity"/>
    <property type="evidence" value="ECO:0007669"/>
    <property type="project" value="InterPro"/>
</dbReference>
<dbReference type="GO" id="GO:0004518">
    <property type="term" value="F:nuclease activity"/>
    <property type="evidence" value="ECO:0000314"/>
    <property type="project" value="SGD"/>
</dbReference>
<dbReference type="GO" id="GO:0016491">
    <property type="term" value="F:oxidoreductase activity"/>
    <property type="evidence" value="ECO:0007669"/>
    <property type="project" value="InterPro"/>
</dbReference>
<dbReference type="GO" id="GO:0006122">
    <property type="term" value="P:mitochondrial electron transport, ubiquinol to cytochrome c"/>
    <property type="evidence" value="ECO:0000318"/>
    <property type="project" value="GO_Central"/>
</dbReference>
<dbReference type="GO" id="GO:0006397">
    <property type="term" value="P:mRNA processing"/>
    <property type="evidence" value="ECO:0007669"/>
    <property type="project" value="UniProtKB-KW"/>
</dbReference>
<dbReference type="GO" id="GO:0008380">
    <property type="term" value="P:RNA splicing"/>
    <property type="evidence" value="ECO:0000314"/>
    <property type="project" value="SGD"/>
</dbReference>
<dbReference type="CDD" id="cd00284">
    <property type="entry name" value="Cytochrome_b_N"/>
    <property type="match status" value="1"/>
</dbReference>
<dbReference type="FunFam" id="3.10.28.10:FF:000026">
    <property type="entry name" value="Intron-encoded DNA endonuclease aI5 alpha"/>
    <property type="match status" value="1"/>
</dbReference>
<dbReference type="FunFam" id="3.10.28.10:FF:000005">
    <property type="entry name" value="Pentatricopeptide repeat-containing protein At2g15820, chloroplastic"/>
    <property type="match status" value="1"/>
</dbReference>
<dbReference type="Gene3D" id="1.20.810.10">
    <property type="entry name" value="Cytochrome Bc1 Complex, Chain C"/>
    <property type="match status" value="1"/>
</dbReference>
<dbReference type="Gene3D" id="3.10.28.10">
    <property type="entry name" value="Homing endonucleases"/>
    <property type="match status" value="2"/>
</dbReference>
<dbReference type="InterPro" id="IPR005797">
    <property type="entry name" value="Cyt_b/b6_N"/>
</dbReference>
<dbReference type="InterPro" id="IPR027387">
    <property type="entry name" value="Cytb/b6-like_sf"/>
</dbReference>
<dbReference type="InterPro" id="IPR048259">
    <property type="entry name" value="Cytochrome_b_N_euk/bac"/>
</dbReference>
<dbReference type="InterPro" id="IPR016174">
    <property type="entry name" value="Di-haem_cyt_TM"/>
</dbReference>
<dbReference type="InterPro" id="IPR027434">
    <property type="entry name" value="Homing_endonucl"/>
</dbReference>
<dbReference type="InterPro" id="IPR004860">
    <property type="entry name" value="LAGLIDADG_dom"/>
</dbReference>
<dbReference type="PANTHER" id="PTHR19271">
    <property type="entry name" value="CYTOCHROME B"/>
    <property type="match status" value="1"/>
</dbReference>
<dbReference type="PANTHER" id="PTHR19271:SF16">
    <property type="entry name" value="CYTOCHROME B"/>
    <property type="match status" value="1"/>
</dbReference>
<dbReference type="Pfam" id="PF00033">
    <property type="entry name" value="Cytochrome_B"/>
    <property type="match status" value="1"/>
</dbReference>
<dbReference type="Pfam" id="PF03161">
    <property type="entry name" value="LAGLIDADG_2"/>
    <property type="match status" value="1"/>
</dbReference>
<dbReference type="SUPFAM" id="SSF55608">
    <property type="entry name" value="Homing endonucleases"/>
    <property type="match status" value="1"/>
</dbReference>
<dbReference type="SUPFAM" id="SSF81342">
    <property type="entry name" value="Transmembrane di-heme cytochromes"/>
    <property type="match status" value="1"/>
</dbReference>
<dbReference type="PROSITE" id="PS51002">
    <property type="entry name" value="CYTB_NTER"/>
    <property type="match status" value="1"/>
</dbReference>
<sequence length="423" mass="49326">MAFRKSNVYLSLVNSYIIDSPQPSSINYWWNMGSLLGLCLVIQIVTGIFMAMHYSSNIELAFSSVEHIMRDVHNGYILRYLHANGASFFFMVMFMHMAKGLYYGSYRSPRVTLWNVGVIIFILTIATAFLGYCCVYGQMSHWGNMNIASNMFNMMKTIYMMMLMLLIYIFYTIMMRQMMKTKEYTMLIKSMDYINKNKYMINLNMTNKKDMNNNIGPLNMNILSIIYGSMLGDGHAEKRKGGKGTRIVFQQEYCNINYLYYLHSLLANLGYCNTNLPLIKTRLGKKGKIRQYLKFNTWTYDSFNMIYSEWYIKNMSGKGNIKVIPKSLDNYLTPLALAIWIMDDGCKLGKGLKFTTNCFSYKDVQYLTYLLHNKYNIKSTITKGNKENTQFVIYVWKESMPILTKIVSPYIIPSMKYKLGNYL</sequence>
<proteinExistence type="evidence at protein level"/>
<organism>
    <name type="scientific">Saccharomyces cerevisiae (strain ATCC 204508 / S288c)</name>
    <name type="common">Baker's yeast</name>
    <dbReference type="NCBI Taxonomy" id="559292"/>
    <lineage>
        <taxon>Eukaryota</taxon>
        <taxon>Fungi</taxon>
        <taxon>Dikarya</taxon>
        <taxon>Ascomycota</taxon>
        <taxon>Saccharomycotina</taxon>
        <taxon>Saccharomycetes</taxon>
        <taxon>Saccharomycetales</taxon>
        <taxon>Saccharomycetaceae</taxon>
        <taxon>Saccharomyces</taxon>
    </lineage>
</organism>
<gene>
    <name type="primary">BI2</name>
    <name type="ordered locus">Q0110</name>
</gene>
<evidence type="ECO:0000255" key="1"/>
<evidence type="ECO:0000255" key="2">
    <source>
        <dbReference type="PROSITE-ProRule" id="PRU00968"/>
    </source>
</evidence>
<evidence type="ECO:0000269" key="3">
    <source>
    </source>
</evidence>
<evidence type="ECO:0000269" key="4">
    <source>
    </source>
</evidence>
<evidence type="ECO:0000269" key="5">
    <source>
    </source>
</evidence>
<evidence type="ECO:0000305" key="6"/>
<keyword id="KW-0472">Membrane</keyword>
<keyword id="KW-0496">Mitochondrion</keyword>
<keyword id="KW-0999">Mitochondrion inner membrane</keyword>
<keyword id="KW-0507">mRNA processing</keyword>
<keyword id="KW-0508">mRNA splicing</keyword>
<keyword id="KW-1185">Reference proteome</keyword>
<keyword id="KW-0812">Transmembrane</keyword>
<keyword id="KW-1133">Transmembrane helix</keyword>